<evidence type="ECO:0000255" key="1">
    <source>
        <dbReference type="PROSITE-ProRule" id="PRU00238"/>
    </source>
</evidence>
<evidence type="ECO:0000269" key="2">
    <source>
    </source>
</evidence>
<protein>
    <recommendedName>
        <fullName>Extracellular globin-2B</fullName>
    </recommendedName>
    <alternativeName>
        <fullName>Erythrocruorin</fullName>
    </alternativeName>
    <alternativeName>
        <fullName>Extracellular globin IIB</fullName>
    </alternativeName>
</protein>
<comment type="subunit">
    <text>Disulfide bonded trimer of chains IIA, IIB, and IIC.</text>
</comment>
<comment type="subcellular location">
    <subcellularLocation>
        <location>Secreted</location>
    </subcellularLocation>
</comment>
<comment type="miscellaneous">
    <text>Giant hemoglobins of worms are formed of a monomeric subunit and a disulfide-bonded trimer.</text>
</comment>
<comment type="similarity">
    <text evidence="1">Belongs to the globin family.</text>
</comment>
<dbReference type="SMR" id="P13578"/>
<dbReference type="GO" id="GO:0005576">
    <property type="term" value="C:extracellular region"/>
    <property type="evidence" value="ECO:0007669"/>
    <property type="project" value="UniProtKB-SubCell"/>
</dbReference>
<dbReference type="GO" id="GO:0005833">
    <property type="term" value="C:hemoglobin complex"/>
    <property type="evidence" value="ECO:0007669"/>
    <property type="project" value="InterPro"/>
</dbReference>
<dbReference type="GO" id="GO:0020037">
    <property type="term" value="F:heme binding"/>
    <property type="evidence" value="ECO:0007669"/>
    <property type="project" value="InterPro"/>
</dbReference>
<dbReference type="GO" id="GO:0005506">
    <property type="term" value="F:iron ion binding"/>
    <property type="evidence" value="ECO:0007669"/>
    <property type="project" value="InterPro"/>
</dbReference>
<dbReference type="GO" id="GO:0019825">
    <property type="term" value="F:oxygen binding"/>
    <property type="evidence" value="ECO:0007669"/>
    <property type="project" value="InterPro"/>
</dbReference>
<dbReference type="GO" id="GO:0005344">
    <property type="term" value="F:oxygen carrier activity"/>
    <property type="evidence" value="ECO:0007669"/>
    <property type="project" value="UniProtKB-KW"/>
</dbReference>
<dbReference type="CDD" id="cd01040">
    <property type="entry name" value="Mb-like"/>
    <property type="match status" value="1"/>
</dbReference>
<dbReference type="Gene3D" id="1.10.490.10">
    <property type="entry name" value="Globins"/>
    <property type="match status" value="1"/>
</dbReference>
<dbReference type="InterPro" id="IPR000971">
    <property type="entry name" value="Globin"/>
</dbReference>
<dbReference type="InterPro" id="IPR050532">
    <property type="entry name" value="Globin-like_OT"/>
</dbReference>
<dbReference type="InterPro" id="IPR009050">
    <property type="entry name" value="Globin-like_sf"/>
</dbReference>
<dbReference type="InterPro" id="IPR012292">
    <property type="entry name" value="Globin/Proto"/>
</dbReference>
<dbReference type="InterPro" id="IPR014610">
    <property type="entry name" value="Haemoglobin_extracell"/>
</dbReference>
<dbReference type="InterPro" id="IPR044399">
    <property type="entry name" value="Mb-like_M"/>
</dbReference>
<dbReference type="PANTHER" id="PTHR46458">
    <property type="entry name" value="BLR2807 PROTEIN"/>
    <property type="match status" value="1"/>
</dbReference>
<dbReference type="PANTHER" id="PTHR46458:SF1">
    <property type="entry name" value="GEO09476P1"/>
    <property type="match status" value="1"/>
</dbReference>
<dbReference type="Pfam" id="PF00042">
    <property type="entry name" value="Globin"/>
    <property type="match status" value="1"/>
</dbReference>
<dbReference type="PIRSF" id="PIRSF036517">
    <property type="entry name" value="Ext_hemo"/>
    <property type="match status" value="1"/>
</dbReference>
<dbReference type="SUPFAM" id="SSF46458">
    <property type="entry name" value="Globin-like"/>
    <property type="match status" value="1"/>
</dbReference>
<dbReference type="PROSITE" id="PS01033">
    <property type="entry name" value="GLOBIN"/>
    <property type="match status" value="1"/>
</dbReference>
<accession>P13578</accession>
<proteinExistence type="evidence at protein level"/>
<reference key="1">
    <citation type="journal article" date="1985" name="J. Biol. Chem.">
        <title>Amino acid sequence of polypeptide chain IIB of extracellular hemoglobin from the polychaete Tylorrhynchus heterochaetus.</title>
        <authorList>
            <person name="Suzuki T."/>
            <person name="Yasunaga H."/>
            <person name="Furukohri T."/>
            <person name="Nakamura K."/>
            <person name="Gotoh T."/>
        </authorList>
    </citation>
    <scope>PROTEIN SEQUENCE</scope>
</reference>
<reference key="2">
    <citation type="journal article" date="1988" name="J. Biol. Chem.">
        <title>Novel S-S loops in the giant hemoglobin of Tylorrhynchus heterochaetus.</title>
        <authorList>
            <person name="Suzuki T."/>
            <person name="Kapp O.H."/>
            <person name="Gotoh T."/>
        </authorList>
    </citation>
    <scope>DISULFIDE BONDS</scope>
</reference>
<name>GLB3_TYLHE</name>
<feature type="chain" id="PRO_0000052514" description="Extracellular globin-2B">
    <location>
        <begin position="1"/>
        <end position="148"/>
    </location>
</feature>
<feature type="domain" description="Globin" evidence="1">
    <location>
        <begin position="3"/>
        <end position="148"/>
    </location>
</feature>
<feature type="binding site" description="proximal binding residue" evidence="1">
    <location>
        <position position="98"/>
    </location>
    <ligand>
        <name>heme b</name>
        <dbReference type="ChEBI" id="CHEBI:60344"/>
    </ligand>
    <ligandPart>
        <name>Fe</name>
        <dbReference type="ChEBI" id="CHEBI:18248"/>
    </ligandPart>
</feature>
<feature type="disulfide bond" description="Interchain (with chain IID)" evidence="2">
    <location>
        <position position="3"/>
    </location>
</feature>
<feature type="disulfide bond" evidence="2">
    <location>
        <begin position="4"/>
        <end position="135"/>
    </location>
</feature>
<organism>
    <name type="scientific">Tylorrhynchus heterochetus</name>
    <name type="common">Japanese palolo worm</name>
    <name type="synonym">Nereis heterochaeta</name>
    <dbReference type="NCBI Taxonomy" id="3228785"/>
    <lineage>
        <taxon>Eukaryota</taxon>
        <taxon>Metazoa</taxon>
        <taxon>Spiralia</taxon>
        <taxon>Lophotrochozoa</taxon>
        <taxon>Annelida</taxon>
        <taxon>Polychaeta</taxon>
        <taxon>Errantia</taxon>
        <taxon>Phyllodocida</taxon>
        <taxon>Nereididae</taxon>
        <taxon>Tylorrhynchus</taxon>
    </lineage>
</organism>
<sequence>DDCCSAADRHEVLDNWKGIWSAEFTGRRVAIGQAIFQELFALDPNAKGVFGRVNVDKPSEADWKAHVIRVINGLDLAVNLLEDPKALQEELKHLARQHRERSGVKAVYFDEMEKALLKVLPQVSSHFNSGAWDRCFTRIADVIKAELP</sequence>
<keyword id="KW-0903">Direct protein sequencing</keyword>
<keyword id="KW-1015">Disulfide bond</keyword>
<keyword id="KW-0349">Heme</keyword>
<keyword id="KW-0408">Iron</keyword>
<keyword id="KW-0479">Metal-binding</keyword>
<keyword id="KW-0561">Oxygen transport</keyword>
<keyword id="KW-0964">Secreted</keyword>
<keyword id="KW-0813">Transport</keyword>